<keyword id="KW-0002">3D-structure</keyword>
<keyword id="KW-0147">Chitin-binding</keyword>
<keyword id="KW-1015">Disulfide bond</keyword>
<keyword id="KW-0325">Glycoprotein</keyword>
<keyword id="KW-1185">Reference proteome</keyword>
<keyword id="KW-0677">Repeat</keyword>
<keyword id="KW-0964">Secreted</keyword>
<keyword id="KW-0732">Signal</keyword>
<keyword id="KW-0843">Virulence</keyword>
<reference key="1">
    <citation type="journal article" date="2008" name="Mol. Microbiol.">
        <title>The novel Cladosporium fulvum lysin motif effector Ecp6 is a virulence factor with orthologues in other fungal species.</title>
        <authorList>
            <person name="Bolton M.D."/>
            <person name="van Esse H.P."/>
            <person name="Vossen J.H."/>
            <person name="de Jonge R."/>
            <person name="Stergiopoulos I."/>
            <person name="Stulemeijer I.J.E."/>
            <person name="van den Berg G."/>
            <person name="Borras-Hidalgo O."/>
            <person name="Dekker H.L."/>
            <person name="de Koster C.G."/>
            <person name="de Wit P.J.G.M."/>
            <person name="Joosten M.H.A.J."/>
            <person name="Thomma B.P.H.J."/>
        </authorList>
    </citation>
    <scope>NUCLEOTIDE SEQUENCE [MRNA]</scope>
    <scope>FUNCTION</scope>
    <scope>DOMAIN</scope>
    <scope>INDUCTION</scope>
    <scope>SUBCELLULAR LOCATION</scope>
    <scope>DISRUPTION PHENOTYPE</scope>
</reference>
<reference key="2">
    <citation type="submission" date="2016-10" db="EMBL/GenBank/DDBJ databases">
        <title>Novel effectors identified in the apoplast of Cladosporium fulvum-infected tomato.</title>
        <authorList>
            <person name="Mesarich C.H."/>
            <person name="de Wit P.J.G.M."/>
        </authorList>
    </citation>
    <scope>NUCLEOTIDE SEQUENCE [GENOMIC DNA]</scope>
    <source>
        <strain>0WU</strain>
    </source>
</reference>
<reference key="3">
    <citation type="journal article" date="2022" name="Microb. Genom.">
        <title>A chromosome-scale genome assembly of the tomato pathogen Cladosporium fulvum reveals a compartmentalized genome architecture and the presence of a dispensable chromosome.</title>
        <authorList>
            <person name="Zaccaron A.Z."/>
            <person name="Chen L.-H."/>
            <person name="Samaras A."/>
            <person name="Stergiopoulos I."/>
        </authorList>
    </citation>
    <scope>NUCLEOTIDE SEQUENCE [LARGE SCALE GENOMIC DNA]</scope>
    <source>
        <strain>Race5_Kim</strain>
    </source>
</reference>
<reference key="4">
    <citation type="journal article" date="2010" name="Science">
        <title>Conserved fungal LysM effector Ecp6 prevents chitin-triggered immunity in plants.</title>
        <authorList>
            <person name="de Jonge R."/>
            <person name="van Esse H.P."/>
            <person name="Kombrink A."/>
            <person name="Shinya T."/>
            <person name="Desaki Y."/>
            <person name="Bours R."/>
            <person name="van der Krol S."/>
            <person name="Shibuya N."/>
            <person name="Joosten M.H."/>
            <person name="Thomma B.P."/>
        </authorList>
    </citation>
    <scope>FUNCTION</scope>
    <scope>CHITIN-BNDING</scope>
</reference>
<reference evidence="9 10" key="5">
    <citation type="journal article" date="2013" name="Elife">
        <title>Fungal effector Ecp6 outcompetes host immune receptor for chitin binding through intrachain LysM dimerization.</title>
        <authorList>
            <person name="Sanchez-Vallet A."/>
            <person name="Saleem-Batcha R."/>
            <person name="Kombrink A."/>
            <person name="Hansen G."/>
            <person name="Valkenburg D.J."/>
            <person name="Thomma B.P."/>
            <person name="Mesters J.R."/>
        </authorList>
    </citation>
    <scope>X-RAY CRYSTALLOGRAPHY (1.59 ANGSTROMS) IN COMPLEX WITH CHITIN</scope>
    <scope>GLYCOSYLATION AT ASN-133 AND ASN-222</scope>
    <scope>DISULFIDE BONDS</scope>
    <scope>CHITIN-BINDING</scope>
    <scope>DOMAIN</scope>
    <scope>FUNCTION</scope>
    <scope>SUBUNIT</scope>
    <scope>MUTAGENESIS OF THR-51; ASN-76; THR-124; ASP-150; LEU-181 AND SER-206</scope>
</reference>
<organism>
    <name type="scientific">Passalora fulva</name>
    <name type="common">Tomato leaf mold</name>
    <name type="synonym">Cladosporium fulvum</name>
    <dbReference type="NCBI Taxonomy" id="5499"/>
    <lineage>
        <taxon>Eukaryota</taxon>
        <taxon>Fungi</taxon>
        <taxon>Dikarya</taxon>
        <taxon>Ascomycota</taxon>
        <taxon>Pezizomycotina</taxon>
        <taxon>Dothideomycetes</taxon>
        <taxon>Dothideomycetidae</taxon>
        <taxon>Mycosphaerellales</taxon>
        <taxon>Mycosphaerellaceae</taxon>
        <taxon>Fulvia</taxon>
    </lineage>
</organism>
<gene>
    <name evidence="7" type="primary">ECP6</name>
    <name type="ORF">CLAFUR5_10085</name>
</gene>
<feature type="signal peptide" evidence="1">
    <location>
        <begin position="1"/>
        <end position="18"/>
    </location>
</feature>
<feature type="chain" id="PRO_5041156519" description="Secreted LysM effector ECP6">
    <location>
        <begin position="19"/>
        <end position="228"/>
    </location>
</feature>
<feature type="domain" description="LysM 1" evidence="3">
    <location>
        <begin position="42"/>
        <end position="86"/>
    </location>
</feature>
<feature type="domain" description="LysM 2" evidence="3">
    <location>
        <begin position="115"/>
        <end position="160"/>
    </location>
</feature>
<feature type="domain" description="LysM 3" evidence="3">
    <location>
        <begin position="172"/>
        <end position="216"/>
    </location>
</feature>
<feature type="binding site" evidence="6 9 10">
    <location>
        <position position="51"/>
    </location>
    <ligand>
        <name>chitin</name>
        <dbReference type="ChEBI" id="CHEBI:17029"/>
    </ligand>
</feature>
<feature type="binding site" evidence="6 9 10">
    <location>
        <position position="53"/>
    </location>
    <ligand>
        <name>chitin</name>
        <dbReference type="ChEBI" id="CHEBI:17029"/>
    </ligand>
</feature>
<feature type="binding site" evidence="6 9 10">
    <location>
        <position position="76"/>
    </location>
    <ligand>
        <name>chitin</name>
        <dbReference type="ChEBI" id="CHEBI:17029"/>
    </ligand>
</feature>
<feature type="binding site" evidence="6 9 10">
    <location>
        <position position="78"/>
    </location>
    <ligand>
        <name>chitin</name>
        <dbReference type="ChEBI" id="CHEBI:17029"/>
    </ligand>
</feature>
<feature type="binding site" evidence="6 9 10">
    <location>
        <position position="179"/>
    </location>
    <ligand>
        <name>chitin</name>
        <dbReference type="ChEBI" id="CHEBI:17029"/>
    </ligand>
</feature>
<feature type="binding site" evidence="6 9 10">
    <location>
        <position position="181"/>
    </location>
    <ligand>
        <name>chitin</name>
        <dbReference type="ChEBI" id="CHEBI:17029"/>
    </ligand>
</feature>
<feature type="binding site" evidence="6 9 10">
    <location>
        <position position="183"/>
    </location>
    <ligand>
        <name>chitin</name>
        <dbReference type="ChEBI" id="CHEBI:17029"/>
    </ligand>
</feature>
<feature type="binding site" evidence="6 9 10">
    <location>
        <position position="205"/>
    </location>
    <ligand>
        <name>chitin</name>
        <dbReference type="ChEBI" id="CHEBI:17029"/>
    </ligand>
</feature>
<feature type="binding site" evidence="6 9 10">
    <location>
        <position position="206"/>
    </location>
    <ligand>
        <name>chitin</name>
        <dbReference type="ChEBI" id="CHEBI:17029"/>
    </ligand>
</feature>
<feature type="binding site" evidence="6 9 10">
    <location>
        <position position="208"/>
    </location>
    <ligand>
        <name>chitin</name>
        <dbReference type="ChEBI" id="CHEBI:17029"/>
    </ligand>
</feature>
<feature type="glycosylation site" description="N-linked (GlcNAc...) asparagine" evidence="2">
    <location>
        <position position="89"/>
    </location>
</feature>
<feature type="glycosylation site" description="N-linked (GlcNAc...) asparagine" evidence="2">
    <location>
        <position position="95"/>
    </location>
</feature>
<feature type="glycosylation site" description="N-linked (GlcNAc...) asparagine" evidence="2">
    <location>
        <position position="127"/>
    </location>
</feature>
<feature type="glycosylation site" description="N-linked (GlcNAc...) asparagine" evidence="2 6 9 10">
    <location>
        <position position="133"/>
    </location>
</feature>
<feature type="glycosylation site" description="N-linked (GlcNAc...) asparagine" evidence="2 6 9 10">
    <location>
        <position position="222"/>
    </location>
</feature>
<feature type="disulfide bond" evidence="6 9 10">
    <location>
        <begin position="36"/>
        <end position="90"/>
    </location>
</feature>
<feature type="disulfide bond" evidence="6 9 10">
    <location>
        <begin position="64"/>
        <end position="98"/>
    </location>
</feature>
<feature type="disulfide bond" evidence="6 9 10">
    <location>
        <begin position="109"/>
        <end position="163"/>
    </location>
</feature>
<feature type="disulfide bond" evidence="6 9 10">
    <location>
        <begin position="168"/>
        <end position="220"/>
    </location>
</feature>
<feature type="mutagenesis site" description="Results in improper protein folding but does not abolish chitin-binding." evidence="6">
    <original>T</original>
    <variation>R</variation>
    <location>
        <position position="51"/>
    </location>
</feature>
<feature type="mutagenesis site" description="Results in improper protein folding but does not abolish chitin-binding." evidence="6">
    <original>N</original>
    <variation>K</variation>
    <location>
        <position position="76"/>
    </location>
</feature>
<feature type="mutagenesis site" description="Impairs the binding of chitohexaose." evidence="6">
    <original>T</original>
    <variation>R</variation>
    <location>
        <position position="124"/>
    </location>
</feature>
<feature type="mutagenesis site" description="Impairs the binding of chitohexaose." evidence="6">
    <original>D</original>
    <variation>K</variation>
    <location>
        <position position="150"/>
    </location>
</feature>
<feature type="mutagenesis site" description="Does not abolish chitin-binding and stiil suppresses chitin-triggered immunity of the tomato cells." evidence="6">
    <original>L</original>
    <variation>R</variation>
    <location>
        <position position="181"/>
    </location>
</feature>
<feature type="mutagenesis site" description="Does not abolish chitin-binding and stiil suppresses chitin-triggered immunity of the tomato cells." evidence="6">
    <original>S</original>
    <variation>K</variation>
    <location>
        <position position="206"/>
    </location>
</feature>
<feature type="strand" evidence="11">
    <location>
        <begin position="39"/>
        <end position="45"/>
    </location>
</feature>
<feature type="helix" evidence="11">
    <location>
        <begin position="52"/>
        <end position="58"/>
    </location>
</feature>
<feature type="helix" evidence="11">
    <location>
        <begin position="63"/>
        <end position="69"/>
    </location>
</feature>
<feature type="strand" evidence="11">
    <location>
        <begin position="83"/>
        <end position="89"/>
    </location>
</feature>
<feature type="strand" evidence="12">
    <location>
        <begin position="96"/>
        <end position="98"/>
    </location>
</feature>
<feature type="strand" evidence="11">
    <location>
        <begin position="107"/>
        <end position="112"/>
    </location>
</feature>
<feature type="strand" evidence="11">
    <location>
        <begin position="115"/>
        <end position="118"/>
    </location>
</feature>
<feature type="helix" evidence="11">
    <location>
        <begin position="125"/>
        <end position="131"/>
    </location>
</feature>
<feature type="helix" evidence="11">
    <location>
        <begin position="136"/>
        <end position="141"/>
    </location>
</feature>
<feature type="strand" evidence="11">
    <location>
        <begin position="157"/>
        <end position="159"/>
    </location>
</feature>
<feature type="strand" evidence="11">
    <location>
        <begin position="164"/>
        <end position="169"/>
    </location>
</feature>
<feature type="strand" evidence="11">
    <location>
        <begin position="172"/>
        <end position="175"/>
    </location>
</feature>
<feature type="helix" evidence="11">
    <location>
        <begin position="182"/>
        <end position="189"/>
    </location>
</feature>
<feature type="helix" evidence="11">
    <location>
        <begin position="193"/>
        <end position="199"/>
    </location>
</feature>
<feature type="turn" evidence="11">
    <location>
        <begin position="200"/>
        <end position="202"/>
    </location>
</feature>
<feature type="helix" evidence="11">
    <location>
        <begin position="205"/>
        <end position="207"/>
    </location>
</feature>
<feature type="strand" evidence="11">
    <location>
        <begin position="213"/>
        <end position="216"/>
    </location>
</feature>
<feature type="strand" evidence="11">
    <location>
        <begin position="220"/>
        <end position="222"/>
    </location>
</feature>
<accession>B3VBK9</accession>
<accession>A0A1P8YXP5</accession>
<evidence type="ECO:0000255" key="1"/>
<evidence type="ECO:0000255" key="2">
    <source>
        <dbReference type="PROSITE-ProRule" id="PRU00498"/>
    </source>
</evidence>
<evidence type="ECO:0000255" key="3">
    <source>
        <dbReference type="PROSITE-ProRule" id="PRU01118"/>
    </source>
</evidence>
<evidence type="ECO:0000269" key="4">
    <source>
    </source>
</evidence>
<evidence type="ECO:0000269" key="5">
    <source>
    </source>
</evidence>
<evidence type="ECO:0000269" key="6">
    <source>
    </source>
</evidence>
<evidence type="ECO:0000303" key="7">
    <source>
    </source>
</evidence>
<evidence type="ECO:0000305" key="8"/>
<evidence type="ECO:0007744" key="9">
    <source>
        <dbReference type="PDB" id="4B8V"/>
    </source>
</evidence>
<evidence type="ECO:0007744" key="10">
    <source>
        <dbReference type="PDB" id="4B9H"/>
    </source>
</evidence>
<evidence type="ECO:0007829" key="11">
    <source>
        <dbReference type="PDB" id="4B8V"/>
    </source>
</evidence>
<evidence type="ECO:0007829" key="12">
    <source>
        <dbReference type="PDB" id="4B9H"/>
    </source>
</evidence>
<comment type="function">
    <text evidence="4 5">Secreted effector that enables the plant pathogenic fungus to manipulate host defenses for successful infection (PubMed:18452583). Binds chitine, but not to any other glycan, including the N-linked glycan chitobiose (PubMed:20724636). Outcompetes host immune receptor for chitin binding through intrachain LysM dimerization (PubMed:18452583, PubMed:20724636). During infection, sequesters chitin oligosaccharides that are released from the cell walls of invading hyphae to prevent elicitation of host immunity (PubMed:20724636).</text>
</comment>
<comment type="subunit">
    <text evidence="6">Forms homodimers.</text>
</comment>
<comment type="subcellular location">
    <subcellularLocation>
        <location evidence="4">Secreted</location>
    </subcellularLocation>
</comment>
<comment type="induction">
    <text evidence="4">Expression is up-regulated during plant infection.</text>
</comment>
<comment type="domain">
    <text evidence="6">The LysM (lysin motif) domains are small globular domains involved in binding chitin in eukaryotes. ECP6 contains 3 LysM domains.</text>
</comment>
<comment type="domain">
    <text evidence="6">LysM1 and LysM3 domains cooperate to bring two chitin-binding regions together, composing a novel type of binding groove in which one chitin tetramer is nearly completely buried and engaged in many non-covalent interactions, including 12 hydrogen bonds. The LysM1-LysM3 interdomain groove binds chitin with ultrahigh affinity.</text>
</comment>
<comment type="domain">
    <text evidence="6">LysM2 domain also contains a functional chitin-binding site.</text>
</comment>
<comment type="disruption phenotype">
    <text evidence="4">Leads to a significant reduction in virulence on tomato.</text>
</comment>
<comment type="miscellaneous">
    <text evidence="8">In plants, chitin acts as a microbe-associated molecular pattern (MAMP) that is recognized by lysin motif (LysM)-containing plant cell surface-localized pattern recognition receptors (PRRs) that activate a plethora of downstream immune responses.</text>
</comment>
<comment type="similarity">
    <text evidence="8">Belongs to the secreted LysM effector family.</text>
</comment>
<comment type="sequence caution" evidence="8">
    <conflict type="erroneous gene model prediction">
        <sequence resource="EMBL-CDS" id="AQA29283"/>
    </conflict>
</comment>
<proteinExistence type="evidence at protein level"/>
<protein>
    <recommendedName>
        <fullName evidence="7">Secreted LysM effector ECP6</fullName>
    </recommendedName>
    <alternativeName>
        <fullName evidence="7">Extracellular protzein 6</fullName>
    </alternativeName>
    <alternativeName>
        <fullName evidence="7">LysM domain-containing protein ECP6</fullName>
    </alternativeName>
</protein>
<dbReference type="EMBL" id="EU730588">
    <property type="protein sequence ID" value="ACF19427.1"/>
    <property type="molecule type" value="mRNA"/>
</dbReference>
<dbReference type="EMBL" id="KX943112">
    <property type="protein sequence ID" value="AQA29283.1"/>
    <property type="status" value="ALT_SEQ"/>
    <property type="molecule type" value="Genomic_DNA"/>
</dbReference>
<dbReference type="EMBL" id="CP090169">
    <property type="protein sequence ID" value="UJO19933.1"/>
    <property type="molecule type" value="Genomic_DNA"/>
</dbReference>
<dbReference type="PDB" id="4B8V">
    <property type="method" value="X-ray"/>
    <property type="resolution" value="1.59 A"/>
    <property type="chains" value="A=1-228"/>
</dbReference>
<dbReference type="PDB" id="4B9H">
    <property type="method" value="X-ray"/>
    <property type="resolution" value="2.10 A"/>
    <property type="chains" value="A=1-228"/>
</dbReference>
<dbReference type="PDBsum" id="4B8V"/>
<dbReference type="PDBsum" id="4B9H"/>
<dbReference type="SMR" id="B3VBK9"/>
<dbReference type="CAZy" id="CBM50">
    <property type="family name" value="Carbohydrate-Binding Module Family 50"/>
</dbReference>
<dbReference type="UniLectin" id="B3VBK9"/>
<dbReference type="OMA" id="CTMADFT"/>
<dbReference type="OrthoDB" id="2107166at2759"/>
<dbReference type="EvolutionaryTrace" id="B3VBK9"/>
<dbReference type="PHI-base" id="PHI:5495"/>
<dbReference type="PHI-base" id="PHI:5543"/>
<dbReference type="PHI-base" id="PHI:5576"/>
<dbReference type="Proteomes" id="UP000756132">
    <property type="component" value="Chromosome 7"/>
</dbReference>
<dbReference type="GO" id="GO:0005576">
    <property type="term" value="C:extracellular region"/>
    <property type="evidence" value="ECO:0007669"/>
    <property type="project" value="UniProtKB-SubCell"/>
</dbReference>
<dbReference type="GO" id="GO:0008061">
    <property type="term" value="F:chitin binding"/>
    <property type="evidence" value="ECO:0007669"/>
    <property type="project" value="UniProtKB-KW"/>
</dbReference>
<dbReference type="CDD" id="cd00118">
    <property type="entry name" value="LysM"/>
    <property type="match status" value="3"/>
</dbReference>
<dbReference type="Gene3D" id="3.10.350.10">
    <property type="entry name" value="LysM domain"/>
    <property type="match status" value="3"/>
</dbReference>
<dbReference type="InterPro" id="IPR018392">
    <property type="entry name" value="LysM_dom"/>
</dbReference>
<dbReference type="InterPro" id="IPR036779">
    <property type="entry name" value="LysM_dom_sf"/>
</dbReference>
<dbReference type="PANTHER" id="PTHR33734">
    <property type="entry name" value="LYSM DOMAIN-CONTAINING GPI-ANCHORED PROTEIN 2"/>
    <property type="match status" value="1"/>
</dbReference>
<dbReference type="PANTHER" id="PTHR33734:SF22">
    <property type="entry name" value="MEMBRANE-BOUND LYTIC MUREIN TRANSGLYCOSYLASE D"/>
    <property type="match status" value="1"/>
</dbReference>
<dbReference type="Pfam" id="PF01476">
    <property type="entry name" value="LysM"/>
    <property type="match status" value="3"/>
</dbReference>
<dbReference type="SMART" id="SM00257">
    <property type="entry name" value="LysM"/>
    <property type="match status" value="3"/>
</dbReference>
<dbReference type="SUPFAM" id="SSF54106">
    <property type="entry name" value="LysM domain"/>
    <property type="match status" value="3"/>
</dbReference>
<dbReference type="PROSITE" id="PS51782">
    <property type="entry name" value="LYSM"/>
    <property type="match status" value="3"/>
</dbReference>
<name>LYSM_PASFU</name>
<sequence length="228" mass="23878">MQSMILFAAALMGAAVNGFVLPRTDDPDCETKATDCGSTSNIKYTVVKGDTLTSIAKKFKSGICNIVSVNKLANPNLIELGATLIIPENCSNPDNKSCVSTPAEPTETCVPGLPGSYTIVSGDTLTNISQDFNITLDSLIAANTQIENPDAIDVGQIITVPVCPSSQCEAVGTYNIVAGDLFVDLAATYHTTIGQIKALNNNVNPSKLKVGQQIILPQDCKNVTTAVA</sequence>